<keyword id="KW-0963">Cytoplasm</keyword>
<keyword id="KW-0217">Developmental protein</keyword>
<keyword id="KW-0221">Differentiation</keyword>
<keyword id="KW-0479">Metal-binding</keyword>
<keyword id="KW-0524">Neurogenesis</keyword>
<keyword id="KW-0539">Nucleus</keyword>
<keyword id="KW-1185">Reference proteome</keyword>
<keyword id="KW-0677">Repeat</keyword>
<keyword id="KW-0804">Transcription</keyword>
<keyword id="KW-0805">Transcription regulation</keyword>
<keyword id="KW-0808">Transferase</keyword>
<keyword id="KW-0833">Ubl conjugation pathway</keyword>
<keyword id="KW-0862">Zinc</keyword>
<keyword id="KW-0863">Zinc-finger</keyword>
<organism>
    <name type="scientific">Xenopus tropicalis</name>
    <name type="common">Western clawed frog</name>
    <name type="synonym">Silurana tropicalis</name>
    <dbReference type="NCBI Taxonomy" id="8364"/>
    <lineage>
        <taxon>Eukaryota</taxon>
        <taxon>Metazoa</taxon>
        <taxon>Chordata</taxon>
        <taxon>Craniata</taxon>
        <taxon>Vertebrata</taxon>
        <taxon>Euteleostomi</taxon>
        <taxon>Amphibia</taxon>
        <taxon>Batrachia</taxon>
        <taxon>Anura</taxon>
        <taxon>Pipoidea</taxon>
        <taxon>Pipidae</taxon>
        <taxon>Xenopodinae</taxon>
        <taxon>Xenopus</taxon>
        <taxon>Silurana</taxon>
    </lineage>
</organism>
<accession>Q6GLD9</accession>
<proteinExistence type="evidence at transcript level"/>
<comment type="function">
    <text evidence="1 2">E3 ubiquitin ligase catalyzing the covalent attachment of ubiquitin moieties onto substrate proteins (By similarity). Inhibits neurogenesis and axis formation during embryonic development by modulating the phosphatidylinositol 3-kinase (PI3K) pathway (By similarity). Acts downstream of PI3K and akt1 to up-regulate gsk3b mRNA expression (By similarity).</text>
</comment>
<comment type="catalytic activity">
    <reaction evidence="2">
        <text>S-ubiquitinyl-[E2 ubiquitin-conjugating enzyme]-L-cysteine + [acceptor protein]-L-lysine = [E2 ubiquitin-conjugating enzyme]-L-cysteine + N(6)-ubiquitinyl-[acceptor protein]-L-lysine.</text>
        <dbReference type="EC" id="2.3.2.27"/>
    </reaction>
</comment>
<comment type="pathway">
    <text>Protein modification; protein ubiquitination.</text>
</comment>
<comment type="subcellular location">
    <subcellularLocation>
        <location evidence="2">Cytoplasm</location>
    </subcellularLocation>
    <subcellularLocation>
        <location evidence="2">Nucleus</location>
    </subcellularLocation>
</comment>
<comment type="caution">
    <text evidence="7">Although the makorin-type Cys-His region lacks the final His residue, the following Asp residue may be able to coordinate Zn(2+).</text>
</comment>
<sequence>MNTKHVTCRYFLHGVCREGGRCLFSHDLATSKPSTVCRFYQRGQCAYGARCRYDHVKPCNGSVFYPPQEMAPAPLESTPPLLPTQEAAAPVTKSAPQRREKKSVVLRDRDLCGASVEKAHPDPALRPGCAADPPVSELEAKPHSYLEAICTGLDETPIPSAYPDAPQQLCPFAQAGGCHYGESCPYIHGNVCEICGLQVLHPYDQEQRGHHEKLCMANFERDMERAFAFQASEGKVCSICMERVYDKQSPSERRFGILSNCHHTYCLACIRQWRCARQFENPVIKSCPECRVISEFVIPSAYWVEDQSKKFELIEAFKQGMGKKACKYFDQGRGTCPFGGKCLYLHAYPDGTRAEPEKPRKQLGSEGTVRFLNSVRLWDFIEEREQRNLPDAEDEVAELGELFMHLSGVGEEPPAASN</sequence>
<protein>
    <recommendedName>
        <fullName>E3 ubiquitin-protein ligase makorin-2</fullName>
        <ecNumber evidence="2">2.3.2.27</ecNumber>
    </recommendedName>
    <alternativeName>
        <fullName evidence="7">RING-type E3 ubiquitin transferase makorin-2</fullName>
    </alternativeName>
</protein>
<evidence type="ECO:0000250" key="1">
    <source>
        <dbReference type="UniProtKB" id="B0F0H3"/>
    </source>
</evidence>
<evidence type="ECO:0000250" key="2">
    <source>
        <dbReference type="UniProtKB" id="Q9ERV1"/>
    </source>
</evidence>
<evidence type="ECO:0000255" key="3"/>
<evidence type="ECO:0000255" key="4">
    <source>
        <dbReference type="PROSITE-ProRule" id="PRU00175"/>
    </source>
</evidence>
<evidence type="ECO:0000255" key="5">
    <source>
        <dbReference type="PROSITE-ProRule" id="PRU00723"/>
    </source>
</evidence>
<evidence type="ECO:0000256" key="6">
    <source>
        <dbReference type="SAM" id="MobiDB-lite"/>
    </source>
</evidence>
<evidence type="ECO:0000305" key="7"/>
<evidence type="ECO:0000312" key="8">
    <source>
        <dbReference type="EMBL" id="AAH74559.1"/>
    </source>
</evidence>
<name>MKRN2_XENTR</name>
<feature type="chain" id="PRO_0000361050" description="E3 ubiquitin-protein ligase makorin-2">
    <location>
        <begin position="1"/>
        <end position="418"/>
    </location>
</feature>
<feature type="zinc finger region" description="C3H1-type 1" evidence="5">
    <location>
        <begin position="2"/>
        <end position="29"/>
    </location>
</feature>
<feature type="zinc finger region" description="C3H1-type 2" evidence="5">
    <location>
        <begin position="31"/>
        <end position="58"/>
    </location>
</feature>
<feature type="zinc finger region" description="C3H1-type 3" evidence="5">
    <location>
        <begin position="164"/>
        <end position="191"/>
    </location>
</feature>
<feature type="zinc finger region" description="RING-type" evidence="4">
    <location>
        <begin position="237"/>
        <end position="291"/>
    </location>
</feature>
<feature type="zinc finger region" description="C3H1-type 4" evidence="5">
    <location>
        <begin position="320"/>
        <end position="349"/>
    </location>
</feature>
<feature type="region of interest" description="Disordered" evidence="6">
    <location>
        <begin position="76"/>
        <end position="100"/>
    </location>
</feature>
<feature type="region of interest" description="Makorin-type Cys-His" evidence="3">
    <location>
        <begin position="192"/>
        <end position="221"/>
    </location>
</feature>
<dbReference type="EC" id="2.3.2.27" evidence="2"/>
<dbReference type="EMBL" id="BC074559">
    <property type="protein sequence ID" value="AAH74559.1"/>
    <property type="molecule type" value="mRNA"/>
</dbReference>
<dbReference type="RefSeq" id="NP_001005447.1">
    <property type="nucleotide sequence ID" value="NM_001005447.1"/>
</dbReference>
<dbReference type="FunCoup" id="Q6GLD9">
    <property type="interactions" value="3469"/>
</dbReference>
<dbReference type="DNASU" id="448038"/>
<dbReference type="GeneID" id="448038"/>
<dbReference type="KEGG" id="xtr:448038"/>
<dbReference type="CTD" id="23609"/>
<dbReference type="Xenbase" id="XB-GENE-5879487">
    <property type="gene designation" value="mkrn2"/>
</dbReference>
<dbReference type="eggNOG" id="KOG1039">
    <property type="taxonomic scope" value="Eukaryota"/>
</dbReference>
<dbReference type="InParanoid" id="Q6GLD9"/>
<dbReference type="OMA" id="EKVCMAT"/>
<dbReference type="OrthoDB" id="411372at2759"/>
<dbReference type="UniPathway" id="UPA00143"/>
<dbReference type="Proteomes" id="UP000008143">
    <property type="component" value="Chromosome 4"/>
</dbReference>
<dbReference type="GO" id="GO:0005737">
    <property type="term" value="C:cytoplasm"/>
    <property type="evidence" value="ECO:0000250"/>
    <property type="project" value="UniProtKB"/>
</dbReference>
<dbReference type="GO" id="GO:0005634">
    <property type="term" value="C:nucleus"/>
    <property type="evidence" value="ECO:0000250"/>
    <property type="project" value="UniProtKB"/>
</dbReference>
<dbReference type="GO" id="GO:0061630">
    <property type="term" value="F:ubiquitin protein ligase activity"/>
    <property type="evidence" value="ECO:0000250"/>
    <property type="project" value="UniProtKB"/>
</dbReference>
<dbReference type="GO" id="GO:0008270">
    <property type="term" value="F:zinc ion binding"/>
    <property type="evidence" value="ECO:0007669"/>
    <property type="project" value="UniProtKB-KW"/>
</dbReference>
<dbReference type="GO" id="GO:0009798">
    <property type="term" value="P:axis specification"/>
    <property type="evidence" value="ECO:0000250"/>
    <property type="project" value="BHF-UCL"/>
</dbReference>
<dbReference type="GO" id="GO:0030154">
    <property type="term" value="P:cell differentiation"/>
    <property type="evidence" value="ECO:0007669"/>
    <property type="project" value="UniProtKB-KW"/>
</dbReference>
<dbReference type="GO" id="GO:0006351">
    <property type="term" value="P:DNA-templated transcription"/>
    <property type="evidence" value="ECO:0000250"/>
    <property type="project" value="UniProtKB"/>
</dbReference>
<dbReference type="GO" id="GO:0009792">
    <property type="term" value="P:embryo development ending in birth or egg hatching"/>
    <property type="evidence" value="ECO:0000250"/>
    <property type="project" value="UniProtKB"/>
</dbReference>
<dbReference type="GO" id="GO:0002862">
    <property type="term" value="P:negative regulation of inflammatory response to antigenic stimulus"/>
    <property type="evidence" value="ECO:0000250"/>
    <property type="project" value="UniProtKB"/>
</dbReference>
<dbReference type="GO" id="GO:0050768">
    <property type="term" value="P:negative regulation of neurogenesis"/>
    <property type="evidence" value="ECO:0000250"/>
    <property type="project" value="UniProtKB"/>
</dbReference>
<dbReference type="GO" id="GO:1901223">
    <property type="term" value="P:negative regulation of non-canonical NF-kappaB signal transduction"/>
    <property type="evidence" value="ECO:0000250"/>
    <property type="project" value="UniProtKB"/>
</dbReference>
<dbReference type="GO" id="GO:0007399">
    <property type="term" value="P:nervous system development"/>
    <property type="evidence" value="ECO:0007669"/>
    <property type="project" value="UniProtKB-KW"/>
</dbReference>
<dbReference type="GO" id="GO:0043491">
    <property type="term" value="P:phosphatidylinositol 3-kinase/protein kinase B signal transduction"/>
    <property type="evidence" value="ECO:0000250"/>
    <property type="project" value="UniProtKB"/>
</dbReference>
<dbReference type="GO" id="GO:0045944">
    <property type="term" value="P:positive regulation of transcription by RNA polymerase II"/>
    <property type="evidence" value="ECO:0000250"/>
    <property type="project" value="UniProtKB"/>
</dbReference>
<dbReference type="GO" id="GO:0000209">
    <property type="term" value="P:protein polyubiquitination"/>
    <property type="evidence" value="ECO:0007669"/>
    <property type="project" value="InterPro"/>
</dbReference>
<dbReference type="GO" id="GO:0006511">
    <property type="term" value="P:ubiquitin-dependent protein catabolic process"/>
    <property type="evidence" value="ECO:0000250"/>
    <property type="project" value="UniProtKB"/>
</dbReference>
<dbReference type="CDD" id="cd16731">
    <property type="entry name" value="RING-HC_MKRN2"/>
    <property type="match status" value="1"/>
</dbReference>
<dbReference type="FunFam" id="3.30.40.10:FF:000117">
    <property type="entry name" value="Probable E3 ubiquitin-protein ligase makorin-1"/>
    <property type="match status" value="1"/>
</dbReference>
<dbReference type="Gene3D" id="4.10.1000.10">
    <property type="entry name" value="Zinc finger, CCCH-type"/>
    <property type="match status" value="1"/>
</dbReference>
<dbReference type="Gene3D" id="3.30.40.10">
    <property type="entry name" value="Zinc/RING finger domain, C3HC4 (zinc finger)"/>
    <property type="match status" value="1"/>
</dbReference>
<dbReference type="InterPro" id="IPR045072">
    <property type="entry name" value="MKRN-like"/>
</dbReference>
<dbReference type="InterPro" id="IPR041367">
    <property type="entry name" value="Znf-CCCH_4"/>
</dbReference>
<dbReference type="InterPro" id="IPR018957">
    <property type="entry name" value="Znf_C3HC4_RING-type"/>
</dbReference>
<dbReference type="InterPro" id="IPR000571">
    <property type="entry name" value="Znf_CCCH"/>
</dbReference>
<dbReference type="InterPro" id="IPR036855">
    <property type="entry name" value="Znf_CCCH_sf"/>
</dbReference>
<dbReference type="InterPro" id="IPR001841">
    <property type="entry name" value="Znf_RING"/>
</dbReference>
<dbReference type="InterPro" id="IPR013083">
    <property type="entry name" value="Znf_RING/FYVE/PHD"/>
</dbReference>
<dbReference type="InterPro" id="IPR017907">
    <property type="entry name" value="Znf_RING_CS"/>
</dbReference>
<dbReference type="PANTHER" id="PTHR11224:SF17">
    <property type="entry name" value="E3 UBIQUITIN-PROTEIN LIGASE MAKORIN-2"/>
    <property type="match status" value="1"/>
</dbReference>
<dbReference type="PANTHER" id="PTHR11224">
    <property type="entry name" value="MAKORIN-RELATED"/>
    <property type="match status" value="1"/>
</dbReference>
<dbReference type="Pfam" id="PF00097">
    <property type="entry name" value="zf-C3HC4"/>
    <property type="match status" value="1"/>
</dbReference>
<dbReference type="Pfam" id="PF00642">
    <property type="entry name" value="zf-CCCH"/>
    <property type="match status" value="1"/>
</dbReference>
<dbReference type="Pfam" id="PF14608">
    <property type="entry name" value="zf-CCCH_2"/>
    <property type="match status" value="2"/>
</dbReference>
<dbReference type="Pfam" id="PF18044">
    <property type="entry name" value="zf-CCCH_4"/>
    <property type="match status" value="1"/>
</dbReference>
<dbReference type="SMART" id="SM00184">
    <property type="entry name" value="RING"/>
    <property type="match status" value="1"/>
</dbReference>
<dbReference type="SMART" id="SM00356">
    <property type="entry name" value="ZnF_C3H1"/>
    <property type="match status" value="4"/>
</dbReference>
<dbReference type="SUPFAM" id="SSF90229">
    <property type="entry name" value="CCCH zinc finger"/>
    <property type="match status" value="2"/>
</dbReference>
<dbReference type="SUPFAM" id="SSF57850">
    <property type="entry name" value="RING/U-box"/>
    <property type="match status" value="1"/>
</dbReference>
<dbReference type="PROSITE" id="PS50103">
    <property type="entry name" value="ZF_C3H1"/>
    <property type="match status" value="4"/>
</dbReference>
<dbReference type="PROSITE" id="PS00518">
    <property type="entry name" value="ZF_RING_1"/>
    <property type="match status" value="1"/>
</dbReference>
<dbReference type="PROSITE" id="PS50089">
    <property type="entry name" value="ZF_RING_2"/>
    <property type="match status" value="1"/>
</dbReference>
<gene>
    <name type="primary">mkrn2</name>
</gene>
<reference key="1">
    <citation type="submission" date="2004-06" db="EMBL/GenBank/DDBJ databases">
        <authorList>
            <consortium name="NIH - Xenopus Gene Collection (XGC) project"/>
        </authorList>
    </citation>
    <scope>NUCLEOTIDE SEQUENCE [LARGE SCALE MRNA]</scope>
    <source>
        <tissue evidence="8">Gastrula</tissue>
    </source>
</reference>